<gene>
    <name evidence="1" type="primary">dapA</name>
    <name type="ordered locus">YpsIP31758_1247</name>
</gene>
<evidence type="ECO:0000255" key="1">
    <source>
        <dbReference type="HAMAP-Rule" id="MF_00418"/>
    </source>
</evidence>
<evidence type="ECO:0000305" key="2"/>
<dbReference type="EC" id="4.3.3.7" evidence="1"/>
<dbReference type="EMBL" id="CP000720">
    <property type="protein sequence ID" value="ABS49449.1"/>
    <property type="molecule type" value="Genomic_DNA"/>
</dbReference>
<dbReference type="RefSeq" id="WP_002227834.1">
    <property type="nucleotide sequence ID" value="NC_009708.1"/>
</dbReference>
<dbReference type="SMR" id="A7FG49"/>
<dbReference type="GeneID" id="96666278"/>
<dbReference type="KEGG" id="ypi:YpsIP31758_1247"/>
<dbReference type="HOGENOM" id="CLU_049343_7_1_6"/>
<dbReference type="UniPathway" id="UPA00034">
    <property type="reaction ID" value="UER00017"/>
</dbReference>
<dbReference type="Proteomes" id="UP000002412">
    <property type="component" value="Chromosome"/>
</dbReference>
<dbReference type="GO" id="GO:0005829">
    <property type="term" value="C:cytosol"/>
    <property type="evidence" value="ECO:0007669"/>
    <property type="project" value="TreeGrafter"/>
</dbReference>
<dbReference type="GO" id="GO:0008840">
    <property type="term" value="F:4-hydroxy-tetrahydrodipicolinate synthase activity"/>
    <property type="evidence" value="ECO:0007669"/>
    <property type="project" value="UniProtKB-UniRule"/>
</dbReference>
<dbReference type="GO" id="GO:0019877">
    <property type="term" value="P:diaminopimelate biosynthetic process"/>
    <property type="evidence" value="ECO:0007669"/>
    <property type="project" value="UniProtKB-UniRule"/>
</dbReference>
<dbReference type="GO" id="GO:0009089">
    <property type="term" value="P:lysine biosynthetic process via diaminopimelate"/>
    <property type="evidence" value="ECO:0007669"/>
    <property type="project" value="UniProtKB-UniRule"/>
</dbReference>
<dbReference type="CDD" id="cd00950">
    <property type="entry name" value="DHDPS"/>
    <property type="match status" value="1"/>
</dbReference>
<dbReference type="FunFam" id="3.20.20.70:FF:000046">
    <property type="entry name" value="4-hydroxy-tetrahydrodipicolinate synthase"/>
    <property type="match status" value="1"/>
</dbReference>
<dbReference type="Gene3D" id="3.20.20.70">
    <property type="entry name" value="Aldolase class I"/>
    <property type="match status" value="1"/>
</dbReference>
<dbReference type="HAMAP" id="MF_00418">
    <property type="entry name" value="DapA"/>
    <property type="match status" value="1"/>
</dbReference>
<dbReference type="InterPro" id="IPR013785">
    <property type="entry name" value="Aldolase_TIM"/>
</dbReference>
<dbReference type="InterPro" id="IPR005263">
    <property type="entry name" value="DapA"/>
</dbReference>
<dbReference type="InterPro" id="IPR002220">
    <property type="entry name" value="DapA-like"/>
</dbReference>
<dbReference type="InterPro" id="IPR020625">
    <property type="entry name" value="Schiff_base-form_aldolases_AS"/>
</dbReference>
<dbReference type="InterPro" id="IPR020624">
    <property type="entry name" value="Schiff_base-form_aldolases_CS"/>
</dbReference>
<dbReference type="NCBIfam" id="TIGR00674">
    <property type="entry name" value="dapA"/>
    <property type="match status" value="1"/>
</dbReference>
<dbReference type="PANTHER" id="PTHR12128:SF66">
    <property type="entry name" value="4-HYDROXY-2-OXOGLUTARATE ALDOLASE, MITOCHONDRIAL"/>
    <property type="match status" value="1"/>
</dbReference>
<dbReference type="PANTHER" id="PTHR12128">
    <property type="entry name" value="DIHYDRODIPICOLINATE SYNTHASE"/>
    <property type="match status" value="1"/>
</dbReference>
<dbReference type="Pfam" id="PF00701">
    <property type="entry name" value="DHDPS"/>
    <property type="match status" value="1"/>
</dbReference>
<dbReference type="PIRSF" id="PIRSF001365">
    <property type="entry name" value="DHDPS"/>
    <property type="match status" value="1"/>
</dbReference>
<dbReference type="PRINTS" id="PR00146">
    <property type="entry name" value="DHPICSNTHASE"/>
</dbReference>
<dbReference type="SMART" id="SM01130">
    <property type="entry name" value="DHDPS"/>
    <property type="match status" value="1"/>
</dbReference>
<dbReference type="SUPFAM" id="SSF51569">
    <property type="entry name" value="Aldolase"/>
    <property type="match status" value="1"/>
</dbReference>
<dbReference type="PROSITE" id="PS00665">
    <property type="entry name" value="DHDPS_1"/>
    <property type="match status" value="1"/>
</dbReference>
<dbReference type="PROSITE" id="PS00666">
    <property type="entry name" value="DHDPS_2"/>
    <property type="match status" value="1"/>
</dbReference>
<protein>
    <recommendedName>
        <fullName evidence="1">4-hydroxy-tetrahydrodipicolinate synthase</fullName>
        <shortName evidence="1">HTPA synthase</shortName>
        <ecNumber evidence="1">4.3.3.7</ecNumber>
    </recommendedName>
</protein>
<feature type="chain" id="PRO_1000060085" description="4-hydroxy-tetrahydrodipicolinate synthase">
    <location>
        <begin position="1"/>
        <end position="293"/>
    </location>
</feature>
<feature type="active site" description="Proton donor/acceptor" evidence="1">
    <location>
        <position position="133"/>
    </location>
</feature>
<feature type="active site" description="Schiff-base intermediate with substrate" evidence="1">
    <location>
        <position position="161"/>
    </location>
</feature>
<feature type="binding site" evidence="1">
    <location>
        <position position="45"/>
    </location>
    <ligand>
        <name>pyruvate</name>
        <dbReference type="ChEBI" id="CHEBI:15361"/>
    </ligand>
</feature>
<feature type="binding site" evidence="1">
    <location>
        <position position="204"/>
    </location>
    <ligand>
        <name>pyruvate</name>
        <dbReference type="ChEBI" id="CHEBI:15361"/>
    </ligand>
</feature>
<feature type="site" description="Part of a proton relay during catalysis" evidence="1">
    <location>
        <position position="44"/>
    </location>
</feature>
<feature type="site" description="Part of a proton relay during catalysis" evidence="1">
    <location>
        <position position="107"/>
    </location>
</feature>
<comment type="function">
    <text evidence="1">Catalyzes the condensation of (S)-aspartate-beta-semialdehyde [(S)-ASA] and pyruvate to 4-hydroxy-tetrahydrodipicolinate (HTPA).</text>
</comment>
<comment type="catalytic activity">
    <reaction evidence="1">
        <text>L-aspartate 4-semialdehyde + pyruvate = (2S,4S)-4-hydroxy-2,3,4,5-tetrahydrodipicolinate + H2O + H(+)</text>
        <dbReference type="Rhea" id="RHEA:34171"/>
        <dbReference type="ChEBI" id="CHEBI:15361"/>
        <dbReference type="ChEBI" id="CHEBI:15377"/>
        <dbReference type="ChEBI" id="CHEBI:15378"/>
        <dbReference type="ChEBI" id="CHEBI:67139"/>
        <dbReference type="ChEBI" id="CHEBI:537519"/>
        <dbReference type="EC" id="4.3.3.7"/>
    </reaction>
</comment>
<comment type="pathway">
    <text evidence="1">Amino-acid biosynthesis; L-lysine biosynthesis via DAP pathway; (S)-tetrahydrodipicolinate from L-aspartate: step 3/4.</text>
</comment>
<comment type="subunit">
    <text evidence="1">Homotetramer; dimer of dimers.</text>
</comment>
<comment type="subcellular location">
    <subcellularLocation>
        <location evidence="1">Cytoplasm</location>
    </subcellularLocation>
</comment>
<comment type="similarity">
    <text evidence="1">Belongs to the DapA family.</text>
</comment>
<comment type="caution">
    <text evidence="2">Was originally thought to be a dihydrodipicolinate synthase (DHDPS), catalyzing the condensation of (S)-aspartate-beta-semialdehyde [(S)-ASA] and pyruvate to dihydrodipicolinate (DHDP). However, it was shown in E.coli that the product of the enzymatic reaction is not dihydrodipicolinate but in fact (4S)-4-hydroxy-2,3,4,5-tetrahydro-(2S)-dipicolinic acid (HTPA), and that the consecutive dehydration reaction leading to DHDP is not spontaneous but catalyzed by DapB.</text>
</comment>
<organism>
    <name type="scientific">Yersinia pseudotuberculosis serotype O:1b (strain IP 31758)</name>
    <dbReference type="NCBI Taxonomy" id="349747"/>
    <lineage>
        <taxon>Bacteria</taxon>
        <taxon>Pseudomonadati</taxon>
        <taxon>Pseudomonadota</taxon>
        <taxon>Gammaproteobacteria</taxon>
        <taxon>Enterobacterales</taxon>
        <taxon>Yersiniaceae</taxon>
        <taxon>Yersinia</taxon>
    </lineage>
</organism>
<sequence length="293" mass="31426">MFTGSIVALITPMDDNGDVDRASLKSLIDYHVASGTAAIVSVGTTGESATLNHDEHVDVVMQTLELADGRIPVIAGTGANSTSEAISLTQRFNDTGVVGCLTVTPYYNRPMQEGLYQHFKAIAESTDLPQILYNVPSRTGCDMLPPTIARLAKIKNIVAVKEATGNLSRVSQIQVLVDDEDFILLSGDDASGLDFMQLGGKGVISVTANIAAREMVELCALAAQGNFAEGRRLNQRLMPLHQHLFVEANPIPVKWAAKRLGLMANDTMRLPMTPLTDPAKRIVEDALKSAGLL</sequence>
<accession>A7FG49</accession>
<name>DAPA_YERP3</name>
<proteinExistence type="inferred from homology"/>
<reference key="1">
    <citation type="journal article" date="2007" name="PLoS Genet.">
        <title>The complete genome sequence of Yersinia pseudotuberculosis IP31758, the causative agent of Far East scarlet-like fever.</title>
        <authorList>
            <person name="Eppinger M."/>
            <person name="Rosovitz M.J."/>
            <person name="Fricke W.F."/>
            <person name="Rasko D.A."/>
            <person name="Kokorina G."/>
            <person name="Fayolle C."/>
            <person name="Lindler L.E."/>
            <person name="Carniel E."/>
            <person name="Ravel J."/>
        </authorList>
    </citation>
    <scope>NUCLEOTIDE SEQUENCE [LARGE SCALE GENOMIC DNA]</scope>
    <source>
        <strain>IP 31758</strain>
    </source>
</reference>
<keyword id="KW-0028">Amino-acid biosynthesis</keyword>
<keyword id="KW-0963">Cytoplasm</keyword>
<keyword id="KW-0220">Diaminopimelate biosynthesis</keyword>
<keyword id="KW-0456">Lyase</keyword>
<keyword id="KW-0457">Lysine biosynthesis</keyword>
<keyword id="KW-0704">Schiff base</keyword>